<dbReference type="EC" id="2.8.1.13" evidence="1"/>
<dbReference type="EMBL" id="CP001252">
    <property type="protein sequence ID" value="ACK46378.1"/>
    <property type="molecule type" value="Genomic_DNA"/>
</dbReference>
<dbReference type="RefSeq" id="WP_012587474.1">
    <property type="nucleotide sequence ID" value="NC_011663.1"/>
</dbReference>
<dbReference type="SMR" id="B8E945"/>
<dbReference type="KEGG" id="sbp:Sbal223_1873"/>
<dbReference type="HOGENOM" id="CLU_035188_1_0_6"/>
<dbReference type="Proteomes" id="UP000002507">
    <property type="component" value="Chromosome"/>
</dbReference>
<dbReference type="GO" id="GO:0005737">
    <property type="term" value="C:cytoplasm"/>
    <property type="evidence" value="ECO:0007669"/>
    <property type="project" value="UniProtKB-SubCell"/>
</dbReference>
<dbReference type="GO" id="GO:0005524">
    <property type="term" value="F:ATP binding"/>
    <property type="evidence" value="ECO:0007669"/>
    <property type="project" value="UniProtKB-KW"/>
</dbReference>
<dbReference type="GO" id="GO:0000049">
    <property type="term" value="F:tRNA binding"/>
    <property type="evidence" value="ECO:0007669"/>
    <property type="project" value="UniProtKB-KW"/>
</dbReference>
<dbReference type="GO" id="GO:0103016">
    <property type="term" value="F:tRNA-uridine 2-sulfurtransferase activity"/>
    <property type="evidence" value="ECO:0007669"/>
    <property type="project" value="UniProtKB-EC"/>
</dbReference>
<dbReference type="GO" id="GO:0002143">
    <property type="term" value="P:tRNA wobble position uridine thiolation"/>
    <property type="evidence" value="ECO:0007669"/>
    <property type="project" value="TreeGrafter"/>
</dbReference>
<dbReference type="CDD" id="cd01998">
    <property type="entry name" value="MnmA_TRMU-like"/>
    <property type="match status" value="1"/>
</dbReference>
<dbReference type="FunFam" id="2.30.30.280:FF:000001">
    <property type="entry name" value="tRNA-specific 2-thiouridylase MnmA"/>
    <property type="match status" value="1"/>
</dbReference>
<dbReference type="FunFam" id="2.40.30.10:FF:000023">
    <property type="entry name" value="tRNA-specific 2-thiouridylase MnmA"/>
    <property type="match status" value="1"/>
</dbReference>
<dbReference type="FunFam" id="3.40.50.620:FF:000004">
    <property type="entry name" value="tRNA-specific 2-thiouridylase MnmA"/>
    <property type="match status" value="1"/>
</dbReference>
<dbReference type="Gene3D" id="2.30.30.280">
    <property type="entry name" value="Adenine nucleotide alpha hydrolases-like domains"/>
    <property type="match status" value="1"/>
</dbReference>
<dbReference type="Gene3D" id="3.40.50.620">
    <property type="entry name" value="HUPs"/>
    <property type="match status" value="1"/>
</dbReference>
<dbReference type="Gene3D" id="2.40.30.10">
    <property type="entry name" value="Translation factors"/>
    <property type="match status" value="1"/>
</dbReference>
<dbReference type="HAMAP" id="MF_00144">
    <property type="entry name" value="tRNA_thiouridyl_MnmA"/>
    <property type="match status" value="1"/>
</dbReference>
<dbReference type="InterPro" id="IPR004506">
    <property type="entry name" value="MnmA-like"/>
</dbReference>
<dbReference type="InterPro" id="IPR046885">
    <property type="entry name" value="MnmA-like_C"/>
</dbReference>
<dbReference type="InterPro" id="IPR046884">
    <property type="entry name" value="MnmA-like_central"/>
</dbReference>
<dbReference type="InterPro" id="IPR023382">
    <property type="entry name" value="MnmA-like_central_sf"/>
</dbReference>
<dbReference type="InterPro" id="IPR014729">
    <property type="entry name" value="Rossmann-like_a/b/a_fold"/>
</dbReference>
<dbReference type="NCBIfam" id="NF001138">
    <property type="entry name" value="PRK00143.1"/>
    <property type="match status" value="1"/>
</dbReference>
<dbReference type="NCBIfam" id="TIGR00420">
    <property type="entry name" value="trmU"/>
    <property type="match status" value="1"/>
</dbReference>
<dbReference type="PANTHER" id="PTHR11933:SF5">
    <property type="entry name" value="MITOCHONDRIAL TRNA-SPECIFIC 2-THIOURIDYLASE 1"/>
    <property type="match status" value="1"/>
</dbReference>
<dbReference type="PANTHER" id="PTHR11933">
    <property type="entry name" value="TRNA 5-METHYLAMINOMETHYL-2-THIOURIDYLATE -METHYLTRANSFERASE"/>
    <property type="match status" value="1"/>
</dbReference>
<dbReference type="Pfam" id="PF03054">
    <property type="entry name" value="tRNA_Me_trans"/>
    <property type="match status" value="1"/>
</dbReference>
<dbReference type="Pfam" id="PF20258">
    <property type="entry name" value="tRNA_Me_trans_C"/>
    <property type="match status" value="1"/>
</dbReference>
<dbReference type="Pfam" id="PF20259">
    <property type="entry name" value="tRNA_Me_trans_M"/>
    <property type="match status" value="1"/>
</dbReference>
<dbReference type="SUPFAM" id="SSF52402">
    <property type="entry name" value="Adenine nucleotide alpha hydrolases-like"/>
    <property type="match status" value="1"/>
</dbReference>
<evidence type="ECO:0000255" key="1">
    <source>
        <dbReference type="HAMAP-Rule" id="MF_00144"/>
    </source>
</evidence>
<feature type="chain" id="PRO_1000198625" description="tRNA-specific 2-thiouridylase MnmA">
    <location>
        <begin position="1"/>
        <end position="372"/>
    </location>
</feature>
<feature type="region of interest" description="Interaction with target base in tRNA" evidence="1">
    <location>
        <begin position="102"/>
        <end position="104"/>
    </location>
</feature>
<feature type="region of interest" description="Interaction with tRNA" evidence="1">
    <location>
        <begin position="155"/>
        <end position="157"/>
    </location>
</feature>
<feature type="region of interest" description="Interaction with tRNA" evidence="1">
    <location>
        <begin position="317"/>
        <end position="318"/>
    </location>
</feature>
<feature type="active site" description="Nucleophile" evidence="1">
    <location>
        <position position="107"/>
    </location>
</feature>
<feature type="active site" description="Cysteine persulfide intermediate" evidence="1">
    <location>
        <position position="205"/>
    </location>
</feature>
<feature type="binding site" evidence="1">
    <location>
        <begin position="16"/>
        <end position="23"/>
    </location>
    <ligand>
        <name>ATP</name>
        <dbReference type="ChEBI" id="CHEBI:30616"/>
    </ligand>
</feature>
<feature type="binding site" evidence="1">
    <location>
        <position position="42"/>
    </location>
    <ligand>
        <name>ATP</name>
        <dbReference type="ChEBI" id="CHEBI:30616"/>
    </ligand>
</feature>
<feature type="binding site" evidence="1">
    <location>
        <position position="132"/>
    </location>
    <ligand>
        <name>ATP</name>
        <dbReference type="ChEBI" id="CHEBI:30616"/>
    </ligand>
</feature>
<feature type="site" description="Interaction with tRNA" evidence="1">
    <location>
        <position position="133"/>
    </location>
</feature>
<feature type="site" description="Interaction with tRNA" evidence="1">
    <location>
        <position position="350"/>
    </location>
</feature>
<feature type="disulfide bond" description="Alternate" evidence="1">
    <location>
        <begin position="107"/>
        <end position="205"/>
    </location>
</feature>
<accession>B8E945</accession>
<name>MNMA_SHEB2</name>
<organism>
    <name type="scientific">Shewanella baltica (strain OS223)</name>
    <dbReference type="NCBI Taxonomy" id="407976"/>
    <lineage>
        <taxon>Bacteria</taxon>
        <taxon>Pseudomonadati</taxon>
        <taxon>Pseudomonadota</taxon>
        <taxon>Gammaproteobacteria</taxon>
        <taxon>Alteromonadales</taxon>
        <taxon>Shewanellaceae</taxon>
        <taxon>Shewanella</taxon>
    </lineage>
</organism>
<reference key="1">
    <citation type="submission" date="2008-12" db="EMBL/GenBank/DDBJ databases">
        <title>Complete sequence of chromosome of Shewanella baltica OS223.</title>
        <authorList>
            <consortium name="US DOE Joint Genome Institute"/>
            <person name="Lucas S."/>
            <person name="Copeland A."/>
            <person name="Lapidus A."/>
            <person name="Glavina del Rio T."/>
            <person name="Dalin E."/>
            <person name="Tice H."/>
            <person name="Bruce D."/>
            <person name="Goodwin L."/>
            <person name="Pitluck S."/>
            <person name="Chertkov O."/>
            <person name="Meincke L."/>
            <person name="Brettin T."/>
            <person name="Detter J.C."/>
            <person name="Han C."/>
            <person name="Kuske C.R."/>
            <person name="Larimer F."/>
            <person name="Land M."/>
            <person name="Hauser L."/>
            <person name="Kyrpides N."/>
            <person name="Ovchinnikova G."/>
            <person name="Brettar I."/>
            <person name="Rodrigues J."/>
            <person name="Konstantinidis K."/>
            <person name="Tiedje J."/>
        </authorList>
    </citation>
    <scope>NUCLEOTIDE SEQUENCE [LARGE SCALE GENOMIC DNA]</scope>
    <source>
        <strain>OS223</strain>
    </source>
</reference>
<sequence>MTSIEPTHTGKKVIVGMSGGVDSSVSAYLLMQQGYQVEGLFMKNWEEDDNNEYCAAAEDLKDAQAVCDKLGIKLHTVNFAAEYWDNVFEYFLAEYKAGRTPNPDIMCNKEIKFKAFLEFADEILDADYIAMGHYVRRRDNSDGSTQMLRGVDGNKDQSYFLYTLSHEQVARSLFPVGELEKHEVREIAKEMGLITHDKKDSTGICFIGERKFTEFLGTYLPAQPGNIETPEGEVIGTHQGLMYHTLGQRKGLGIGGMKNSNDDPWYVVDKDLERNVLIVGQGGHHPRLMSTGMTVNQLHWVDRTGPVDGCHIAVKTRYRQQDVPCTLTYTDEHTLGVVFDEPVAAVTPGQSAVFYDGEVCLGGGIIDQLIRG</sequence>
<protein>
    <recommendedName>
        <fullName evidence="1">tRNA-specific 2-thiouridylase MnmA</fullName>
        <ecNumber evidence="1">2.8.1.13</ecNumber>
    </recommendedName>
</protein>
<comment type="function">
    <text evidence="1">Catalyzes the 2-thiolation of uridine at the wobble position (U34) of tRNA, leading to the formation of s(2)U34.</text>
</comment>
<comment type="catalytic activity">
    <reaction evidence="1">
        <text>S-sulfanyl-L-cysteinyl-[protein] + uridine(34) in tRNA + AH2 + ATP = 2-thiouridine(34) in tRNA + L-cysteinyl-[protein] + A + AMP + diphosphate + H(+)</text>
        <dbReference type="Rhea" id="RHEA:47032"/>
        <dbReference type="Rhea" id="RHEA-COMP:10131"/>
        <dbReference type="Rhea" id="RHEA-COMP:11726"/>
        <dbReference type="Rhea" id="RHEA-COMP:11727"/>
        <dbReference type="Rhea" id="RHEA-COMP:11728"/>
        <dbReference type="ChEBI" id="CHEBI:13193"/>
        <dbReference type="ChEBI" id="CHEBI:15378"/>
        <dbReference type="ChEBI" id="CHEBI:17499"/>
        <dbReference type="ChEBI" id="CHEBI:29950"/>
        <dbReference type="ChEBI" id="CHEBI:30616"/>
        <dbReference type="ChEBI" id="CHEBI:33019"/>
        <dbReference type="ChEBI" id="CHEBI:61963"/>
        <dbReference type="ChEBI" id="CHEBI:65315"/>
        <dbReference type="ChEBI" id="CHEBI:87170"/>
        <dbReference type="ChEBI" id="CHEBI:456215"/>
        <dbReference type="EC" id="2.8.1.13"/>
    </reaction>
</comment>
<comment type="subcellular location">
    <subcellularLocation>
        <location evidence="1">Cytoplasm</location>
    </subcellularLocation>
</comment>
<comment type="similarity">
    <text evidence="1">Belongs to the MnmA/TRMU family.</text>
</comment>
<proteinExistence type="inferred from homology"/>
<keyword id="KW-0067">ATP-binding</keyword>
<keyword id="KW-0963">Cytoplasm</keyword>
<keyword id="KW-1015">Disulfide bond</keyword>
<keyword id="KW-0547">Nucleotide-binding</keyword>
<keyword id="KW-0694">RNA-binding</keyword>
<keyword id="KW-0808">Transferase</keyword>
<keyword id="KW-0819">tRNA processing</keyword>
<keyword id="KW-0820">tRNA-binding</keyword>
<gene>
    <name evidence="1" type="primary">mnmA</name>
    <name type="ordered locus">Sbal223_1873</name>
</gene>